<organism>
    <name type="scientific">Candida albicans</name>
    <name type="common">Yeast</name>
    <dbReference type="NCBI Taxonomy" id="5476"/>
    <lineage>
        <taxon>Eukaryota</taxon>
        <taxon>Fungi</taxon>
        <taxon>Dikarya</taxon>
        <taxon>Ascomycota</taxon>
        <taxon>Saccharomycotina</taxon>
        <taxon>Pichiomycetes</taxon>
        <taxon>Debaryomycetaceae</taxon>
        <taxon>Candida/Lodderomyces clade</taxon>
        <taxon>Candida</taxon>
    </lineage>
</organism>
<evidence type="ECO:0000250" key="1">
    <source>
        <dbReference type="UniProtKB" id="P0CY27"/>
    </source>
</evidence>
<evidence type="ECO:0000250" key="2">
    <source>
        <dbReference type="UniProtKB" id="P0CY29"/>
    </source>
</evidence>
<evidence type="ECO:0000255" key="3"/>
<evidence type="ECO:0000255" key="4">
    <source>
        <dbReference type="PROSITE-ProRule" id="PRU01103"/>
    </source>
</evidence>
<evidence type="ECO:0000255" key="5">
    <source>
        <dbReference type="PROSITE-ProRule" id="PRU10094"/>
    </source>
</evidence>
<evidence type="ECO:0000269" key="6">
    <source>
    </source>
</evidence>
<evidence type="ECO:0000269" key="7">
    <source>
    </source>
</evidence>
<evidence type="ECO:0000269" key="8">
    <source>
    </source>
</evidence>
<evidence type="ECO:0000269" key="9">
    <source>
    </source>
</evidence>
<evidence type="ECO:0000269" key="10">
    <source>
    </source>
</evidence>
<evidence type="ECO:0000269" key="11">
    <source>
    </source>
</evidence>
<evidence type="ECO:0000269" key="12">
    <source>
    </source>
</evidence>
<evidence type="ECO:0000269" key="13">
    <source>
    </source>
</evidence>
<evidence type="ECO:0000269" key="14">
    <source>
    </source>
</evidence>
<evidence type="ECO:0000269" key="15">
    <source>
    </source>
</evidence>
<evidence type="ECO:0000269" key="16">
    <source>
    </source>
</evidence>
<evidence type="ECO:0000269" key="17">
    <source>
    </source>
</evidence>
<evidence type="ECO:0000269" key="18">
    <source>
    </source>
</evidence>
<evidence type="ECO:0000269" key="19">
    <source>
    </source>
</evidence>
<evidence type="ECO:0000269" key="20">
    <source>
    </source>
</evidence>
<evidence type="ECO:0000269" key="21">
    <source>
    </source>
</evidence>
<evidence type="ECO:0000269" key="22">
    <source>
    </source>
</evidence>
<evidence type="ECO:0000269" key="23">
    <source>
    </source>
</evidence>
<evidence type="ECO:0000269" key="24">
    <source>
    </source>
</evidence>
<evidence type="ECO:0000303" key="25">
    <source>
    </source>
</evidence>
<evidence type="ECO:0000303" key="26">
    <source>
    </source>
</evidence>
<evidence type="ECO:0000303" key="27">
    <source>
    </source>
</evidence>
<evidence type="ECO:0000305" key="28"/>
<evidence type="ECO:0007829" key="29">
    <source>
        <dbReference type="PDB" id="1EAG"/>
    </source>
</evidence>
<evidence type="ECO:0007829" key="30">
    <source>
        <dbReference type="PDB" id="1ZAP"/>
    </source>
</evidence>
<evidence type="ECO:0007829" key="31">
    <source>
        <dbReference type="PDB" id="3PVK"/>
    </source>
</evidence>
<feature type="signal peptide" evidence="3">
    <location>
        <begin position="1"/>
        <end position="18"/>
    </location>
</feature>
<feature type="propeptide" id="PRO_0000025850" description="Activation peptide" evidence="8 20 22">
    <location>
        <begin position="19"/>
        <end position="56"/>
    </location>
</feature>
<feature type="chain" id="PRO_0000025851" description="Secreted aspartic protease 2">
    <location>
        <begin position="57"/>
        <end position="398"/>
    </location>
</feature>
<feature type="domain" description="Peptidase A1" evidence="4">
    <location>
        <begin position="70"/>
        <end position="384"/>
    </location>
</feature>
<feature type="active site" evidence="5">
    <location>
        <position position="88"/>
    </location>
</feature>
<feature type="active site" evidence="5">
    <location>
        <position position="274"/>
    </location>
</feature>
<feature type="binding site" evidence="2">
    <location>
        <begin position="88"/>
        <end position="90"/>
    </location>
    <ligand>
        <name>pepstatin A</name>
        <dbReference type="ChEBI" id="CHEBI:190525"/>
        <note>inhibitor</note>
    </ligand>
</feature>
<feature type="binding site" evidence="2">
    <location>
        <begin position="141"/>
        <end position="142"/>
    </location>
    <ligand>
        <name>pepstatin A</name>
        <dbReference type="ChEBI" id="CHEBI:190525"/>
        <note>inhibitor</note>
    </ligand>
</feature>
<feature type="binding site" evidence="2">
    <location>
        <position position="247"/>
    </location>
    <ligand>
        <name>Zn(2+)</name>
        <dbReference type="ChEBI" id="CHEBI:29105"/>
    </ligand>
</feature>
<feature type="binding site" evidence="2">
    <location>
        <position position="270"/>
    </location>
    <ligand>
        <name>Zn(2+)</name>
        <dbReference type="ChEBI" id="CHEBI:29105"/>
    </ligand>
</feature>
<feature type="binding site" evidence="2">
    <location>
        <begin position="274"/>
        <end position="278"/>
    </location>
    <ligand>
        <name>pepstatin A</name>
        <dbReference type="ChEBI" id="CHEBI:190525"/>
        <note>inhibitor</note>
    </ligand>
</feature>
<feature type="glycosylation site" description="N-linked (GlcNAc...) asparagine" evidence="3">
    <location>
        <position position="313"/>
    </location>
</feature>
<feature type="glycosylation site" description="N-linked (GlcNAc...) asparagine" evidence="3">
    <location>
        <position position="321"/>
    </location>
</feature>
<feature type="disulfide bond" evidence="1">
    <location>
        <begin position="103"/>
        <end position="115"/>
    </location>
</feature>
<feature type="disulfide bond" evidence="1">
    <location>
        <begin position="312"/>
        <end position="350"/>
    </location>
</feature>
<feature type="sequence variant" description="In strain: TIMM 2726.">
    <original>A</original>
    <variation>G</variation>
    <location>
        <position position="9"/>
    </location>
</feature>
<feature type="sequence conflict" description="In Ref. 2; CAA44178." evidence="28" ref="2">
    <original>F</original>
    <variation>S</variation>
    <location>
        <position position="43"/>
    </location>
</feature>
<feature type="sequence conflict" description="In Ref. 2; CAA44178." evidence="28" ref="2">
    <original>YLNSPDAATGQIIFGGVDNAKYS</original>
    <variation>ILILQMSPRDKSFSVGLIMLNIV</variation>
    <location>
        <begin position="214"/>
        <end position="236"/>
    </location>
</feature>
<feature type="sequence conflict" description="In Ref. 2; CAA44178." evidence="28" ref="2">
    <original>AYIVYDLDDNEISLAQVKYTSASSISA</original>
    <variation>LILFMIWMIMKFLWLKSNILLFQYFS</variation>
    <location>
        <begin position="370"/>
        <end position="396"/>
    </location>
</feature>
<feature type="strand" evidence="31">
    <location>
        <begin position="59"/>
        <end position="65"/>
    </location>
</feature>
<feature type="strand" evidence="31">
    <location>
        <begin position="67"/>
        <end position="76"/>
    </location>
</feature>
<feature type="turn" evidence="31">
    <location>
        <begin position="77"/>
        <end position="80"/>
    </location>
</feature>
<feature type="strand" evidence="31">
    <location>
        <begin position="81"/>
        <end position="88"/>
    </location>
</feature>
<feature type="strand" evidence="31">
    <location>
        <begin position="94"/>
        <end position="103"/>
    </location>
</feature>
<feature type="helix" evidence="31">
    <location>
        <begin position="114"/>
        <end position="116"/>
    </location>
</feature>
<feature type="helix" evidence="31">
    <location>
        <begin position="123"/>
        <end position="125"/>
    </location>
</feature>
<feature type="strand" evidence="31">
    <location>
        <begin position="130"/>
        <end position="139"/>
    </location>
</feature>
<feature type="strand" evidence="31">
    <location>
        <begin position="141"/>
        <end position="143"/>
    </location>
</feature>
<feature type="strand" evidence="31">
    <location>
        <begin position="145"/>
        <end position="157"/>
    </location>
</feature>
<feature type="strand" evidence="31">
    <location>
        <begin position="160"/>
        <end position="177"/>
    </location>
</feature>
<feature type="strand" evidence="31">
    <location>
        <begin position="179"/>
        <end position="181"/>
    </location>
</feature>
<feature type="helix" evidence="31">
    <location>
        <begin position="185"/>
        <end position="187"/>
    </location>
</feature>
<feature type="helix" evidence="31">
    <location>
        <begin position="196"/>
        <end position="202"/>
    </location>
</feature>
<feature type="strand" evidence="31">
    <location>
        <begin position="205"/>
        <end position="214"/>
    </location>
</feature>
<feature type="strand" evidence="31">
    <location>
        <begin position="221"/>
        <end position="227"/>
    </location>
</feature>
<feature type="strand" evidence="31">
    <location>
        <begin position="229"/>
        <end position="231"/>
    </location>
</feature>
<feature type="strand" evidence="31">
    <location>
        <begin position="234"/>
        <end position="237"/>
    </location>
</feature>
<feature type="strand" evidence="31">
    <location>
        <begin position="240"/>
        <end position="243"/>
    </location>
</feature>
<feature type="strand" evidence="31">
    <location>
        <begin position="247"/>
        <end position="249"/>
    </location>
</feature>
<feature type="strand" evidence="31">
    <location>
        <begin position="251"/>
        <end position="259"/>
    </location>
</feature>
<feature type="strand" evidence="31">
    <location>
        <begin position="262"/>
        <end position="273"/>
    </location>
</feature>
<feature type="strand" evidence="31">
    <location>
        <begin position="278"/>
        <end position="282"/>
    </location>
</feature>
<feature type="helix" evidence="31">
    <location>
        <begin position="284"/>
        <end position="293"/>
    </location>
</feature>
<feature type="strand" evidence="31">
    <location>
        <begin position="297"/>
        <end position="300"/>
    </location>
</feature>
<feature type="strand" evidence="30">
    <location>
        <begin position="302"/>
        <end position="305"/>
    </location>
</feature>
<feature type="strand" evidence="31">
    <location>
        <begin position="306"/>
        <end position="310"/>
    </location>
</feature>
<feature type="strand" evidence="31">
    <location>
        <begin position="316"/>
        <end position="323"/>
    </location>
</feature>
<feature type="strand" evidence="31">
    <location>
        <begin position="327"/>
        <end position="331"/>
    </location>
</feature>
<feature type="helix" evidence="31">
    <location>
        <begin position="332"/>
        <end position="335"/>
    </location>
</feature>
<feature type="strand" evidence="29">
    <location>
        <begin position="336"/>
        <end position="338"/>
    </location>
</feature>
<feature type="turn" evidence="30">
    <location>
        <begin position="339"/>
        <end position="343"/>
    </location>
</feature>
<feature type="strand" evidence="31">
    <location>
        <begin position="350"/>
        <end position="356"/>
    </location>
</feature>
<feature type="helix" evidence="31">
    <location>
        <begin position="364"/>
        <end position="367"/>
    </location>
</feature>
<feature type="strand" evidence="31">
    <location>
        <begin position="370"/>
        <end position="375"/>
    </location>
</feature>
<feature type="turn" evidence="31">
    <location>
        <begin position="376"/>
        <end position="379"/>
    </location>
</feature>
<feature type="strand" evidence="31">
    <location>
        <begin position="380"/>
        <end position="386"/>
    </location>
</feature>
<feature type="strand" evidence="31">
    <location>
        <begin position="394"/>
        <end position="396"/>
    </location>
</feature>
<protein>
    <recommendedName>
        <fullName evidence="26">Secreted aspartic protease 2</fullName>
        <shortName evidence="28">ACP 2</shortName>
        <shortName evidence="28">Aspartate protease 2</shortName>
        <ecNumber evidence="13 17 18 19 23 24">3.4.23.24</ecNumber>
    </recommendedName>
    <alternativeName>
        <fullName evidence="28">Candidapepsin-2</fullName>
    </alternativeName>
    <alternativeName>
        <fullName evidence="27">Pepsinogen-11</fullName>
    </alternativeName>
</protein>
<accession>P0CS83</accession>
<accession>P28871</accession>
<accession>P43097</accession>
<accession>Q59MV8</accession>
<accession>Q8NKF0</accession>
<accession>Q8NKF1</accession>
<sequence length="398" mass="42330">MFLKNIFIALAIALLVDATPTTTKRSAGFVALDFSVVKTPKAFPVTNGQEGKTSKRQAVPVTLHNEQVTYAADITVGSNNQKLNVIVDTGSSDLWVPDVNVDCQVTYSDQTADFCKQKGTYDPSGSSASQDLNTPFKIGYGDGSSSQGTLYKDTVGFGGVSIKNQVLADVDSTSIDQGILGVGYKTNEAGGSYDNVPVTLKKQGVIAKNAYSLYLNSPDAATGQIIFGGVDNAKYSGSLIALPVTSDRELRISLGSVEVSGKTINTDNVDVLLDSGTTITYLQQDLADQIIKAFNGKLTQDSNGNSFYEVDCNLSGDVVFNFSKNAKISVPASEFAASLQGDDGQPYDKCQLLFDVNDANILGDNFLRSAYIVYDLDDNEISLAQVKYTSASSISALT</sequence>
<comment type="function">
    <text evidence="6 7 9 10 11 12 14 16">Secreted aspartic peptidases (SAPs) are a group of ten acidic hydrolases considered as key virulence factors (PubMed:11478679, PubMed:12761103, PubMed:15820985, PubMed:15845479, PubMed:19880183, PubMed:20713630, PubMed:22302440, PubMed:23927842). These enzymes supply the fungus with nutrient amino acids as well as are able to degrade the selected host's proteins involved in the immune defense (PubMed:11478679, PubMed:12761103, PubMed:15820985, PubMed:15845479, PubMed:19880183, PubMed:20713630, PubMed:22302440, PubMed:23927842). Induces host inflammatory cytokine production in a proteolytic activity-independent way (PubMed:20713630). Plays a role in tissue damage during superficial infection (PubMed:12761103). Moreover, acts toward human hemoglobin though limited proteolysis to generate a variety of antimicrobial hemocidins, enabling to compete with the other microorganisms of the same physiological niche using the microbicidal peptides generated from the host protein (PubMed:23927842).</text>
</comment>
<comment type="function">
    <text evidence="17 18 19">Plays a key role in defense against host by cleaving histatin-5 (Hst 5), a peptide from human saliva that carries out fungicidal activity (PubMed:27390786, PubMed:29143452, PubMed:31675138). The cleavage rate decreases in an order of SAP2 &gt; SAP9 &gt; SAP3 &gt; SAP7 &gt; SAP4 &gt; SAP1 &gt; SAP8 (PubMed:27390786). The first cleavage occurs between residues 'Lys-17' and 'His-18' of Hst 5, giving DSHAKRHHGYKRKFHEK and HHSHRGY peptides (PubMed:27390786). Simultaneously, the DSHAKRHHGYKRK peptide is also formed (PubMed:27390786). Further fragmentation by SAP2 results in FHEK and DSHAKRHHGY products (PubMed:27390786).</text>
</comment>
<comment type="catalytic activity">
    <reaction evidence="13 17 18 19 23 24">
        <text>Preferential cleavage at the carboxyl of hydrophobic amino acids, but fails to cleave 15-Leu-|-Tyr-16, 16-Tyr-|-Leu-17 and 24-Phe-|-Phe-25 of insulin B chain. Activates trypsinogen, and degrades keratin.</text>
        <dbReference type="EC" id="3.4.23.24"/>
    </reaction>
</comment>
<comment type="biophysicochemical properties">
    <phDependence>
        <text evidence="13 17 23">Optimum pH is 4.0 using BSA or casein-resorufin as substrates, and 6.0-7.0, the pH of the saliva, for cleavage of Hst 5.</text>
    </phDependence>
</comment>
<comment type="subunit">
    <text evidence="22">Monomer.</text>
</comment>
<comment type="subcellular location">
    <subcellularLocation>
        <location evidence="8 21 22">Secreted</location>
    </subcellularLocation>
</comment>
<comment type="induction">
    <text evidence="9 14 15">Expressed during development of germ tubes, pseudohyphae and true hyphae (PubMed:23484407). Expressed in greater amounts in the mature biofilms compared to early biofilms during inflammatory disorder of the palatal mucosa among denture wearers (PubMed:22302440). Induced by fluconazole (PubMed:15820985).</text>
</comment>
<comment type="similarity">
    <text evidence="28">Belongs to the peptidase A1 family.</text>
</comment>
<proteinExistence type="evidence at protein level"/>
<gene>
    <name evidence="26" type="primary">SAP2</name>
    <name evidence="27" type="synonym">PEP11</name>
    <name evidence="25" type="synonym">PRA11</name>
</gene>
<dbReference type="EC" id="3.4.23.24" evidence="13 17 18 19 23 24"/>
<dbReference type="EMBL" id="M83663">
    <property type="protein sequence ID" value="AAA34332.1"/>
    <property type="molecule type" value="Genomic_DNA"/>
</dbReference>
<dbReference type="EMBL" id="X62289">
    <property type="protein sequence ID" value="CAA44178.1"/>
    <property type="molecule type" value="mRNA"/>
</dbReference>
<dbReference type="PIR" id="A45280">
    <property type="entry name" value="A45280"/>
</dbReference>
<dbReference type="PDB" id="1EAG">
    <property type="method" value="X-ray"/>
    <property type="resolution" value="2.10 A"/>
    <property type="chains" value="A=57-398"/>
</dbReference>
<dbReference type="PDB" id="1ZAP">
    <property type="method" value="X-ray"/>
    <property type="resolution" value="2.50 A"/>
    <property type="chains" value="A=57-398"/>
</dbReference>
<dbReference type="PDB" id="3PVK">
    <property type="method" value="X-ray"/>
    <property type="resolution" value="1.27 A"/>
    <property type="chains" value="A=57-398"/>
</dbReference>
<dbReference type="PDB" id="3Q70">
    <property type="method" value="X-ray"/>
    <property type="resolution" value="1.40 A"/>
    <property type="chains" value="A=57-398"/>
</dbReference>
<dbReference type="PDBsum" id="1EAG"/>
<dbReference type="PDBsum" id="1ZAP"/>
<dbReference type="PDBsum" id="3PVK"/>
<dbReference type="PDBsum" id="3Q70"/>
<dbReference type="SMR" id="P0CS83"/>
<dbReference type="BindingDB" id="P0CS83"/>
<dbReference type="ChEMBL" id="CHEMBL6021"/>
<dbReference type="MEROPS" id="A01.060"/>
<dbReference type="GlyCosmos" id="P0CS83">
    <property type="glycosylation" value="2 sites, No reported glycans"/>
</dbReference>
<dbReference type="VEuPathDB" id="FungiDB:CAWG_02075"/>
<dbReference type="VEuPathDB" id="FungiDB:CR_07800W_A"/>
<dbReference type="BRENDA" id="3.4.23.24">
    <property type="organism ID" value="1096"/>
</dbReference>
<dbReference type="EvolutionaryTrace" id="P0CS83"/>
<dbReference type="GO" id="GO:0005576">
    <property type="term" value="C:extracellular region"/>
    <property type="evidence" value="ECO:0007669"/>
    <property type="project" value="UniProtKB-SubCell"/>
</dbReference>
<dbReference type="GO" id="GO:0004190">
    <property type="term" value="F:aspartic-type endopeptidase activity"/>
    <property type="evidence" value="ECO:0007669"/>
    <property type="project" value="UniProtKB-KW"/>
</dbReference>
<dbReference type="GO" id="GO:0046872">
    <property type="term" value="F:metal ion binding"/>
    <property type="evidence" value="ECO:0007669"/>
    <property type="project" value="UniProtKB-KW"/>
</dbReference>
<dbReference type="GO" id="GO:0006508">
    <property type="term" value="P:proteolysis"/>
    <property type="evidence" value="ECO:0007669"/>
    <property type="project" value="UniProtKB-KW"/>
</dbReference>
<dbReference type="CDD" id="cd05474">
    <property type="entry name" value="SAP_like"/>
    <property type="match status" value="1"/>
</dbReference>
<dbReference type="FunFam" id="2.40.70.10:FF:000011">
    <property type="entry name" value="Aspartic protease"/>
    <property type="match status" value="1"/>
</dbReference>
<dbReference type="FunFam" id="2.40.70.10:FF:000023">
    <property type="entry name" value="Aspartic protease"/>
    <property type="match status" value="1"/>
</dbReference>
<dbReference type="Gene3D" id="2.40.70.10">
    <property type="entry name" value="Acid Proteases"/>
    <property type="match status" value="2"/>
</dbReference>
<dbReference type="InterPro" id="IPR001461">
    <property type="entry name" value="Aspartic_peptidase_A1"/>
</dbReference>
<dbReference type="InterPro" id="IPR001969">
    <property type="entry name" value="Aspartic_peptidase_AS"/>
</dbReference>
<dbReference type="InterPro" id="IPR033121">
    <property type="entry name" value="PEPTIDASE_A1"/>
</dbReference>
<dbReference type="InterPro" id="IPR021109">
    <property type="entry name" value="Peptidase_aspartic_dom_sf"/>
</dbReference>
<dbReference type="InterPro" id="IPR033876">
    <property type="entry name" value="SAP-like"/>
</dbReference>
<dbReference type="PANTHER" id="PTHR47966:SF65">
    <property type="entry name" value="ASPARTIC-TYPE ENDOPEPTIDASE"/>
    <property type="match status" value="1"/>
</dbReference>
<dbReference type="PANTHER" id="PTHR47966">
    <property type="entry name" value="BETA-SITE APP-CLEAVING ENZYME, ISOFORM A-RELATED"/>
    <property type="match status" value="1"/>
</dbReference>
<dbReference type="Pfam" id="PF00026">
    <property type="entry name" value="Asp"/>
    <property type="match status" value="1"/>
</dbReference>
<dbReference type="PRINTS" id="PR00792">
    <property type="entry name" value="PEPSIN"/>
</dbReference>
<dbReference type="SUPFAM" id="SSF50630">
    <property type="entry name" value="Acid proteases"/>
    <property type="match status" value="1"/>
</dbReference>
<dbReference type="PROSITE" id="PS00141">
    <property type="entry name" value="ASP_PROTEASE"/>
    <property type="match status" value="2"/>
</dbReference>
<dbReference type="PROSITE" id="PS51767">
    <property type="entry name" value="PEPTIDASE_A1"/>
    <property type="match status" value="1"/>
</dbReference>
<keyword id="KW-0002">3D-structure</keyword>
<keyword id="KW-0064">Aspartyl protease</keyword>
<keyword id="KW-0165">Cleavage on pair of basic residues</keyword>
<keyword id="KW-0903">Direct protein sequencing</keyword>
<keyword id="KW-1015">Disulfide bond</keyword>
<keyword id="KW-0325">Glycoprotein</keyword>
<keyword id="KW-0378">Hydrolase</keyword>
<keyword id="KW-0479">Metal-binding</keyword>
<keyword id="KW-0645">Protease</keyword>
<keyword id="KW-0964">Secreted</keyword>
<keyword id="KW-0732">Signal</keyword>
<keyword id="KW-0843">Virulence</keyword>
<keyword id="KW-0862">Zinc</keyword>
<keyword id="KW-0865">Zymogen</keyword>
<reference key="1">
    <citation type="journal article" date="1992" name="J. Bacteriol.">
        <title>A second gene for a secreted aspartate proteinase in Candida albicans.</title>
        <authorList>
            <person name="Wright R.J."/>
            <person name="Carne A."/>
            <person name="Hieber A.D."/>
            <person name="Lamont I.L."/>
            <person name="Emerson G.W."/>
            <person name="Sullivan P.A."/>
        </authorList>
    </citation>
    <scope>NUCLEOTIDE SEQUENCE [GENOMIC DNA]</scope>
    <scope>PROTEIN SEQUENCE OF N-TERMINUS</scope>
    <scope>SUBCELLULAR LOCATION</scope>
    <source>
        <strain>ATCC 10261 / CBS 2718 / NBRC 1061 / FMJ 1011</strain>
    </source>
</reference>
<reference key="2">
    <citation type="journal article" date="1992" name="Microbiol. Immunol.">
        <title>cDNA cloning of an aspartic proteinase secreted by Candida albicans.</title>
        <authorList>
            <person name="Mukai H."/>
            <person name="Takeda O."/>
            <person name="Asada K."/>
            <person name="Kato I."/>
            <person name="Murayama S.Y."/>
            <person name="Yamaguchi H."/>
        </authorList>
    </citation>
    <scope>NUCLEOTIDE SEQUENCE [MRNA]</scope>
    <source>
        <strain>TIMM 2726 / 114 / Serotype A</strain>
    </source>
</reference>
<reference key="3">
    <citation type="journal article" date="1993" name="J. Bacteriol.">
        <title>Three distinct secreted aspartyl proteinases in Candida albicans.</title>
        <authorList>
            <person name="White T.C."/>
            <person name="Miyasaki S.H."/>
            <person name="Agabian N."/>
        </authorList>
    </citation>
    <scope>PROTEIN SEQUENCE OF 57-71</scope>
    <source>
        <strain>3153A</strain>
        <strain>SS</strain>
    </source>
</reference>
<reference key="4">
    <citation type="journal article" date="1993" name="Infect. Immun.">
        <title>Heterogeneity of the purified extracellular aspartyl proteinase from Candida albicans: characterization with monoclonal antibodies and N-terminal amino acid sequence analysis.</title>
        <authorList>
            <person name="Morrison C.J."/>
            <person name="Hurst S.F."/>
            <person name="Bragg S.L."/>
            <person name="Kuykendall R.J."/>
            <person name="Diaz H."/>
            <person name="Pohl J."/>
            <person name="Reiss E."/>
        </authorList>
    </citation>
    <scope>SUBCELLULAR LOCATION</scope>
</reference>
<reference key="5">
    <citation type="journal article" date="1993" name="Infect. Immun.">
        <title>The genes encoding the secreted aspartyl proteinases of Candida albicans constitute a family with at least three members.</title>
        <authorList>
            <person name="Magee B.B."/>
            <person name="Hube B."/>
            <person name="Wright R.J."/>
            <person name="Sullivan P.J."/>
            <person name="Magee P.T."/>
        </authorList>
    </citation>
    <scope>IDENTIFICATION</scope>
</reference>
<reference key="6">
    <citation type="journal article" date="1997" name="Microbiology">
        <title>Analysis of secreted aspartic proteinases from Candida albicans: purification and characterization of individual Sap1, Sap2 and Sap3 isoenzymes.</title>
        <authorList>
            <person name="Smolenski G."/>
            <person name="Sullivan P.A."/>
            <person name="Cutfield S.M."/>
            <person name="Cutfield J.F."/>
        </authorList>
    </citation>
    <scope>CATALYTIC ACTIVITY</scope>
    <scope>BIOPHYSICOCHEMICAL PROPERTIES</scope>
</reference>
<reference key="7">
    <citation type="journal article" date="1999" name="J. Infect. Dis.">
        <title>Evidence that members of the secretory aspartyl proteinase gene family, in particular SAP2, are virulence factors for Candida vaginitis.</title>
        <authorList>
            <person name="De Bernardis F."/>
            <person name="Arancia S."/>
            <person name="Morelli L."/>
            <person name="Hube B."/>
            <person name="Sanglard D."/>
            <person name="Schafer W."/>
            <person name="Cassone A."/>
        </authorList>
    </citation>
    <scope>SUBCELLULAR LOCATION</scope>
    <scope>CATALYTIC ACTIVITY</scope>
</reference>
<reference key="8">
    <citation type="journal article" date="2001" name="J. Med. Microbiol.">
        <title>Different isoforms of secreted aspartyl proteinases (Sap) are expressed by Candida albicans during oral and cutaneous candidosis in vivo.</title>
        <authorList>
            <person name="Schaller M."/>
            <person name="Januschke E."/>
            <person name="Schackert C."/>
            <person name="Woerle B."/>
            <person name="Korting H.C."/>
        </authorList>
    </citation>
    <scope>FUNCTION</scope>
</reference>
<reference key="9">
    <citation type="journal article" date="2002" name="J. Mol. Recognit.">
        <title>Analysis of the interaction between the aspartic peptidase inhibitor SQAPI and aspartic peptidases using surface plasmon resonance.</title>
        <authorList>
            <person name="Farley P.C."/>
            <person name="Christeller J.T."/>
            <person name="Sullivan M.E."/>
            <person name="Sullivan P.A."/>
            <person name="Laing W.A."/>
        </authorList>
    </citation>
    <scope>ACTIVITY REGULATION</scope>
</reference>
<reference key="10">
    <citation type="journal article" date="2003" name="Infect. Immun.">
        <title>The secreted aspartyl proteinases Sap1 and Sap2 cause tissue damage in an in vitro model of vaginal candidiasis based on reconstituted human vaginal epithelium.</title>
        <authorList>
            <person name="Schaller M."/>
            <person name="Bein M."/>
            <person name="Korting H.C."/>
            <person name="Baur S."/>
            <person name="Hamm G."/>
            <person name="Monod M."/>
            <person name="Beinhauer S."/>
            <person name="Hube B."/>
        </authorList>
    </citation>
    <scope>FUNCTION</scope>
</reference>
<reference key="11">
    <citation type="journal article" date="2005" name="Infect. Immun.">
        <title>Candida albicans-secreted aspartic proteinases modify the epithelial cytokine response in an in vitro model of vaginal candidiasis.</title>
        <authorList>
            <person name="Schaller M."/>
            <person name="Korting H.C."/>
            <person name="Borelli C."/>
            <person name="Hamm G."/>
            <person name="Hube B."/>
        </authorList>
    </citation>
    <scope>FUNCTION</scope>
</reference>
<reference key="12">
    <citation type="journal article" date="2005" name="J. Antimicrob. Chemother.">
        <title>Exposure of Candida albicans to antifungal agents affects expression of SAP2 and SAP9 secreted proteinase genes.</title>
        <authorList>
            <person name="Copping V.M.S."/>
            <person name="Barelle C.J."/>
            <person name="Hube B."/>
            <person name="Gow N.A.R."/>
            <person name="Brown A.J.P."/>
            <person name="Odds F.C."/>
        </authorList>
    </citation>
    <scope>FUNCTION</scope>
    <scope>INDUCTION</scope>
</reference>
<reference key="13">
    <citation type="journal article" date="2009" name="Mol. Immunol.">
        <title>The yeast Candida albicans evades human complement attack by secretion of aspartic proteases.</title>
        <authorList>
            <person name="Gropp K."/>
            <person name="Schild L."/>
            <person name="Schindler S."/>
            <person name="Hube B."/>
            <person name="Zipfel P.F."/>
            <person name="Skerka C."/>
        </authorList>
    </citation>
    <scope>FUNCTION</scope>
</reference>
<reference key="14">
    <citation type="journal article" date="2010" name="Infect. Immun.">
        <title>The inflammatory response induced by aspartic proteases of Candida albicans is independent of proteolytic activity.</title>
        <authorList>
            <person name="Pietrella D."/>
            <person name="Rachini A."/>
            <person name="Pandey N."/>
            <person name="Schild L."/>
            <person name="Netea M."/>
            <person name="Bistoni F."/>
            <person name="Hube B."/>
            <person name="Vecchiarelli A."/>
        </authorList>
    </citation>
    <scope>FUNCTION</scope>
</reference>
<reference key="15">
    <citation type="journal article" date="2011" name="J. Biochem.">
        <title>Comprehensive characterization of secreted aspartic proteases encoded by a virulence gene family in Candida albicans.</title>
        <authorList>
            <person name="Aoki W."/>
            <person name="Kitahara N."/>
            <person name="Miura N."/>
            <person name="Morisaka H."/>
            <person name="Yamamoto Y."/>
            <person name="Kuroda K."/>
            <person name="Ueda M."/>
        </authorList>
    </citation>
    <scope>CATALYTIC ACTIVITY</scope>
    <scope>BIOPHYSICOCHEMICAL PROPERTIES</scope>
</reference>
<reference key="16">
    <citation type="journal article" date="2012" name="Mycopathologia">
        <title>In vitro Candida albicans biofilm induced proteinase activity and SAP8 expression correlates with in vivo denture stomatitis severity.</title>
        <authorList>
            <person name="Ramage G."/>
            <person name="Coco B."/>
            <person name="Sherry L."/>
            <person name="Bagg J."/>
            <person name="Lappin D.F."/>
        </authorList>
    </citation>
    <scope>FUNCTION</scope>
    <scope>INDUCTION</scope>
</reference>
<reference key="17">
    <citation type="journal article" date="2012" name="Pol. J. Microbiol.">
        <title>In vitro study of secreted aspartyl proteinases Sap1 to Sap3 and Sap4 to Sap6 expression in Candida albicans pleomorphic forms.</title>
        <authorList>
            <person name="Staniszewska M."/>
            <person name="Bondaryk M."/>
            <person name="Siennicka K."/>
            <person name="Kurek A."/>
            <person name="Orlowski J."/>
            <person name="Schaller M."/>
            <person name="Kurzatkowski W."/>
        </authorList>
    </citation>
    <scope>INDUCTION</scope>
</reference>
<reference key="18">
    <citation type="journal article" date="2013" name="Peptides">
        <title>Secreted aspartic peptidases of Candida albicans liberate bactericidal hemocidins from human hemoglobin.</title>
        <authorList>
            <person name="Bochenska O."/>
            <person name="Rapala-Kozik M."/>
            <person name="Wolak N."/>
            <person name="Bras G."/>
            <person name="Kozik A."/>
            <person name="Dubin A."/>
            <person name="Aoki W."/>
            <person name="Ueda M."/>
            <person name="Mak P."/>
        </authorList>
    </citation>
    <scope>FUNCTION</scope>
</reference>
<reference key="19">
    <citation type="journal article" date="2016" name="Acta Biochim. Pol.">
        <title>The action of ten secreted aspartic proteases of pathogenic yeast Candida albicans on major human salivary antimicrobial peptide, histatin 5.</title>
        <authorList>
            <person name="Bochenska O."/>
            <person name="Rapala-Kozik M."/>
            <person name="Wolak N."/>
            <person name="Aoki W."/>
            <person name="Ueda M."/>
            <person name="Kozik A."/>
        </authorList>
    </citation>
    <scope>FUNCTION</scope>
    <scope>CATALYTIC ACTIVITY</scope>
    <scope>BIOPHYSICOCHEMICAL PROPERTIES</scope>
</reference>
<reference key="20">
    <citation type="journal article" date="2018" name="FEBS J.">
        <title>Engineering improved variants of the antifungal peptide histatin 5 with reduced susceptibility to Candida albicans secreted aspartic proteases and enhanced antimicrobial potency.</title>
        <authorList>
            <person name="Ikonomova S.P."/>
            <person name="Moghaddam-Taaheri P."/>
            <person name="Jabra-Rizk M.A."/>
            <person name="Wang Y."/>
            <person name="Karlsson A.J."/>
        </authorList>
    </citation>
    <scope>FUNCTION</scope>
    <scope>CATALYTIC ACTIVITY</scope>
</reference>
<reference key="21">
    <citation type="journal article" date="2020" name="Protein Sci.">
        <title>Effects of histatin 5 modifications on antifungal activity and kinetics of proteolysis.</title>
        <authorList>
            <person name="Ikonomova S.P."/>
            <person name="Moghaddam-Taaheri P."/>
            <person name="Wang Y."/>
            <person name="Doolin M.T."/>
            <person name="Stroka K.M."/>
            <person name="Hube B."/>
            <person name="Karlsson A.J."/>
        </authorList>
    </citation>
    <scope>FUNCTION</scope>
    <scope>CATALYTIC ACTIVITY</scope>
</reference>
<reference key="22">
    <citation type="journal article" date="1995" name="Structure">
        <title>The crystal structure of a major secreted aspartic proteinase from Candida albicans in complexes with two inhibitors.</title>
        <authorList>
            <person name="Cutfield S.M."/>
            <person name="Dodson E.J."/>
            <person name="Anderson B.F."/>
            <person name="Moody P.C.E."/>
            <person name="Marshall C.J."/>
            <person name="Sullivan P.A."/>
            <person name="Cutfield J.F."/>
        </authorList>
    </citation>
    <scope>X-RAY CRYSTALLOGRAPHY (2.1 ANGSTROMS) OF 57-398</scope>
    <source>
        <strain>ATCC 10261 / CBS 2718 / NBRC 1061 / FMJ 1011</strain>
    </source>
</reference>
<reference key="23">
    <citation type="journal article" date="1996" name="Protein Sci.">
        <title>Structure of a secreted aspartic protease from C. albicans complexed with a potent inhibitor: implications for the design of antifungal agents.</title>
        <authorList>
            <person name="Abad-Zapatero C."/>
            <person name="Goldman R."/>
            <person name="Muchmore S.W."/>
            <person name="Hutchins C."/>
            <person name="Stewart K."/>
            <person name="Navaza J."/>
            <person name="Payne C.D."/>
            <person name="Ray T.L."/>
        </authorList>
    </citation>
    <scope>X-RAY CRYSTALLOGRAPHY (2.5 ANGSTROMS) OF 57-398 IN COMPLEX WITH A70450</scope>
    <scope>PROTEIN SEQUENCE OF N-TERMINUS</scope>
    <scope>SUBCELLULAR LOCATION</scope>
    <scope>SUBUNIT</scope>
    <source>
        <strain>Val-1</strain>
    </source>
</reference>
<name>CARP2_CANAX</name>